<name>RL6_VIBC3</name>
<keyword id="KW-0687">Ribonucleoprotein</keyword>
<keyword id="KW-0689">Ribosomal protein</keyword>
<keyword id="KW-0694">RNA-binding</keyword>
<keyword id="KW-0699">rRNA-binding</keyword>
<organism>
    <name type="scientific">Vibrio cholerae serotype O1 (strain ATCC 39541 / Classical Ogawa 395 / O395)</name>
    <dbReference type="NCBI Taxonomy" id="345073"/>
    <lineage>
        <taxon>Bacteria</taxon>
        <taxon>Pseudomonadati</taxon>
        <taxon>Pseudomonadota</taxon>
        <taxon>Gammaproteobacteria</taxon>
        <taxon>Vibrionales</taxon>
        <taxon>Vibrionaceae</taxon>
        <taxon>Vibrio</taxon>
    </lineage>
</organism>
<protein>
    <recommendedName>
        <fullName evidence="1">Large ribosomal subunit protein uL6</fullName>
    </recommendedName>
    <alternativeName>
        <fullName evidence="2">50S ribosomal protein L6</fullName>
    </alternativeName>
</protein>
<accession>A5F565</accession>
<accession>C3LXI0</accession>
<sequence>MSRVAKAPVAIPAGVEVKLNGQEITIKGAKGELSRVFHKGVVIAQEDNQLTFGPREGVANAWAQAGTARALVKNMVVGVTEGFTKKLVLKGVGYRAAMKGNAVGLTLGFSHPVEHELPEGIKAECPSQTEIVLTGCDKQLVGQVAADIRSYRAPEPYKGKGIRYADENVRSKEAKKK</sequence>
<reference key="1">
    <citation type="submission" date="2007-03" db="EMBL/GenBank/DDBJ databases">
        <authorList>
            <person name="Heidelberg J."/>
        </authorList>
    </citation>
    <scope>NUCLEOTIDE SEQUENCE [LARGE SCALE GENOMIC DNA]</scope>
    <source>
        <strain>ATCC 39541 / Classical Ogawa 395 / O395</strain>
    </source>
</reference>
<reference key="2">
    <citation type="journal article" date="2008" name="PLoS ONE">
        <title>A recalibrated molecular clock and independent origins for the cholera pandemic clones.</title>
        <authorList>
            <person name="Feng L."/>
            <person name="Reeves P.R."/>
            <person name="Lan R."/>
            <person name="Ren Y."/>
            <person name="Gao C."/>
            <person name="Zhou Z."/>
            <person name="Ren Y."/>
            <person name="Cheng J."/>
            <person name="Wang W."/>
            <person name="Wang J."/>
            <person name="Qian W."/>
            <person name="Li D."/>
            <person name="Wang L."/>
        </authorList>
    </citation>
    <scope>NUCLEOTIDE SEQUENCE [LARGE SCALE GENOMIC DNA]</scope>
    <source>
        <strain>ATCC 39541 / Classical Ogawa 395 / O395</strain>
    </source>
</reference>
<dbReference type="EMBL" id="CP000627">
    <property type="protein sequence ID" value="ABQ20162.1"/>
    <property type="molecule type" value="Genomic_DNA"/>
</dbReference>
<dbReference type="EMBL" id="CP001235">
    <property type="protein sequence ID" value="ACP10680.1"/>
    <property type="molecule type" value="Genomic_DNA"/>
</dbReference>
<dbReference type="RefSeq" id="WP_000091926.1">
    <property type="nucleotide sequence ID" value="NZ_JAACZH010000007.1"/>
</dbReference>
<dbReference type="SMR" id="A5F565"/>
<dbReference type="GeneID" id="89513442"/>
<dbReference type="KEGG" id="vco:VC0395_A2159"/>
<dbReference type="KEGG" id="vcr:VC395_2694"/>
<dbReference type="PATRIC" id="fig|345073.21.peg.2594"/>
<dbReference type="eggNOG" id="COG0097">
    <property type="taxonomic scope" value="Bacteria"/>
</dbReference>
<dbReference type="HOGENOM" id="CLU_065464_1_2_6"/>
<dbReference type="OrthoDB" id="9805007at2"/>
<dbReference type="Proteomes" id="UP000000249">
    <property type="component" value="Chromosome 2"/>
</dbReference>
<dbReference type="GO" id="GO:0022625">
    <property type="term" value="C:cytosolic large ribosomal subunit"/>
    <property type="evidence" value="ECO:0007669"/>
    <property type="project" value="TreeGrafter"/>
</dbReference>
<dbReference type="GO" id="GO:0019843">
    <property type="term" value="F:rRNA binding"/>
    <property type="evidence" value="ECO:0007669"/>
    <property type="project" value="UniProtKB-UniRule"/>
</dbReference>
<dbReference type="GO" id="GO:0003735">
    <property type="term" value="F:structural constituent of ribosome"/>
    <property type="evidence" value="ECO:0007669"/>
    <property type="project" value="InterPro"/>
</dbReference>
<dbReference type="GO" id="GO:0002181">
    <property type="term" value="P:cytoplasmic translation"/>
    <property type="evidence" value="ECO:0007669"/>
    <property type="project" value="TreeGrafter"/>
</dbReference>
<dbReference type="FunFam" id="3.90.930.12:FF:000001">
    <property type="entry name" value="50S ribosomal protein L6"/>
    <property type="match status" value="1"/>
</dbReference>
<dbReference type="FunFam" id="3.90.930.12:FF:000002">
    <property type="entry name" value="50S ribosomal protein L6"/>
    <property type="match status" value="1"/>
</dbReference>
<dbReference type="Gene3D" id="3.90.930.12">
    <property type="entry name" value="Ribosomal protein L6, alpha-beta domain"/>
    <property type="match status" value="2"/>
</dbReference>
<dbReference type="HAMAP" id="MF_01365_B">
    <property type="entry name" value="Ribosomal_uL6_B"/>
    <property type="match status" value="1"/>
</dbReference>
<dbReference type="InterPro" id="IPR000702">
    <property type="entry name" value="Ribosomal_uL6-like"/>
</dbReference>
<dbReference type="InterPro" id="IPR036789">
    <property type="entry name" value="Ribosomal_uL6-like_a/b-dom_sf"/>
</dbReference>
<dbReference type="InterPro" id="IPR020040">
    <property type="entry name" value="Ribosomal_uL6_a/b-dom"/>
</dbReference>
<dbReference type="InterPro" id="IPR019906">
    <property type="entry name" value="Ribosomal_uL6_bac-type"/>
</dbReference>
<dbReference type="InterPro" id="IPR002358">
    <property type="entry name" value="Ribosomal_uL6_CS"/>
</dbReference>
<dbReference type="NCBIfam" id="TIGR03654">
    <property type="entry name" value="L6_bact"/>
    <property type="match status" value="1"/>
</dbReference>
<dbReference type="PANTHER" id="PTHR11655">
    <property type="entry name" value="60S/50S RIBOSOMAL PROTEIN L6/L9"/>
    <property type="match status" value="1"/>
</dbReference>
<dbReference type="PANTHER" id="PTHR11655:SF14">
    <property type="entry name" value="LARGE RIBOSOMAL SUBUNIT PROTEIN UL6M"/>
    <property type="match status" value="1"/>
</dbReference>
<dbReference type="Pfam" id="PF00347">
    <property type="entry name" value="Ribosomal_L6"/>
    <property type="match status" value="2"/>
</dbReference>
<dbReference type="PIRSF" id="PIRSF002162">
    <property type="entry name" value="Ribosomal_L6"/>
    <property type="match status" value="1"/>
</dbReference>
<dbReference type="PRINTS" id="PR00059">
    <property type="entry name" value="RIBOSOMALL6"/>
</dbReference>
<dbReference type="SUPFAM" id="SSF56053">
    <property type="entry name" value="Ribosomal protein L6"/>
    <property type="match status" value="2"/>
</dbReference>
<dbReference type="PROSITE" id="PS00525">
    <property type="entry name" value="RIBOSOMAL_L6_1"/>
    <property type="match status" value="1"/>
</dbReference>
<feature type="chain" id="PRO_1000073409" description="Large ribosomal subunit protein uL6">
    <location>
        <begin position="1"/>
        <end position="177"/>
    </location>
</feature>
<gene>
    <name evidence="1" type="primary">rplF</name>
    <name type="ordered locus">VC0395_A2159</name>
    <name type="ordered locus">VC395_2694</name>
</gene>
<evidence type="ECO:0000255" key="1">
    <source>
        <dbReference type="HAMAP-Rule" id="MF_01365"/>
    </source>
</evidence>
<evidence type="ECO:0000305" key="2"/>
<comment type="function">
    <text evidence="1">This protein binds to the 23S rRNA, and is important in its secondary structure. It is located near the subunit interface in the base of the L7/L12 stalk, and near the tRNA binding site of the peptidyltransferase center.</text>
</comment>
<comment type="subunit">
    <text evidence="1">Part of the 50S ribosomal subunit.</text>
</comment>
<comment type="similarity">
    <text evidence="1">Belongs to the universal ribosomal protein uL6 family.</text>
</comment>
<proteinExistence type="inferred from homology"/>